<protein>
    <recommendedName>
        <fullName evidence="1">3-hydroxydecanoyl-[acyl-carrier-protein] dehydratase</fullName>
        <ecNumber evidence="1">4.2.1.59</ecNumber>
    </recommendedName>
    <alternativeName>
        <fullName evidence="1">3-hydroxyacyl-[acyl-carrier-protein] dehydratase FabA</fullName>
    </alternativeName>
    <alternativeName>
        <fullName evidence="1">Beta-hydroxydecanoyl thioester dehydrase</fullName>
    </alternativeName>
    <alternativeName>
        <fullName evidence="1">Trans-2-decenoyl-[acyl-carrier-protein] isomerase</fullName>
        <ecNumber evidence="1">5.3.3.14</ecNumber>
    </alternativeName>
</protein>
<sequence length="171" mass="18777">MNKANSFSKEELVTCGHGNLFGANSPRLPIDNMLMIDRITKINDDGGEFGKGEIVAELDIDPSLWFFGCHFETDPVMPGCLGLDAMWQLVGFFLGWEGAEGKGRALGVGEVKFTGQVLPDAKKVTYKLTIKRKVYRKLVMGIADAVMEVDGREIYSATDLKVGIFTDTSSF</sequence>
<keyword id="KW-0963">Cytoplasm</keyword>
<keyword id="KW-0275">Fatty acid biosynthesis</keyword>
<keyword id="KW-0276">Fatty acid metabolism</keyword>
<keyword id="KW-0413">Isomerase</keyword>
<keyword id="KW-0444">Lipid biosynthesis</keyword>
<keyword id="KW-0443">Lipid metabolism</keyword>
<keyword id="KW-0456">Lyase</keyword>
<keyword id="KW-1185">Reference proteome</keyword>
<reference key="1">
    <citation type="submission" date="2007-03" db="EMBL/GenBank/DDBJ databases">
        <title>Complete sequence of Shewanella loihica PV-4.</title>
        <authorList>
            <consortium name="US DOE Joint Genome Institute"/>
            <person name="Copeland A."/>
            <person name="Lucas S."/>
            <person name="Lapidus A."/>
            <person name="Barry K."/>
            <person name="Detter J.C."/>
            <person name="Glavina del Rio T."/>
            <person name="Hammon N."/>
            <person name="Israni S."/>
            <person name="Dalin E."/>
            <person name="Tice H."/>
            <person name="Pitluck S."/>
            <person name="Chain P."/>
            <person name="Malfatti S."/>
            <person name="Shin M."/>
            <person name="Vergez L."/>
            <person name="Schmutz J."/>
            <person name="Larimer F."/>
            <person name="Land M."/>
            <person name="Hauser L."/>
            <person name="Kyrpides N."/>
            <person name="Mikhailova N."/>
            <person name="Romine M.F."/>
            <person name="Serres G."/>
            <person name="Fredrickson J."/>
            <person name="Tiedje J."/>
            <person name="Richardson P."/>
        </authorList>
    </citation>
    <scope>NUCLEOTIDE SEQUENCE [LARGE SCALE GENOMIC DNA]</scope>
    <source>
        <strain>ATCC BAA-1088 / PV-4</strain>
    </source>
</reference>
<organism>
    <name type="scientific">Shewanella loihica (strain ATCC BAA-1088 / PV-4)</name>
    <dbReference type="NCBI Taxonomy" id="323850"/>
    <lineage>
        <taxon>Bacteria</taxon>
        <taxon>Pseudomonadati</taxon>
        <taxon>Pseudomonadota</taxon>
        <taxon>Gammaproteobacteria</taxon>
        <taxon>Alteromonadales</taxon>
        <taxon>Shewanellaceae</taxon>
        <taxon>Shewanella</taxon>
    </lineage>
</organism>
<gene>
    <name evidence="1" type="primary">fabA</name>
    <name type="ordered locus">Shew_1817</name>
</gene>
<name>FABA_SHELP</name>
<accession>A3QDY5</accession>
<proteinExistence type="inferred from homology"/>
<evidence type="ECO:0000255" key="1">
    <source>
        <dbReference type="HAMAP-Rule" id="MF_00405"/>
    </source>
</evidence>
<comment type="function">
    <text evidence="1">Necessary for the introduction of cis unsaturation into fatty acids. Catalyzes the dehydration of (3R)-3-hydroxydecanoyl-ACP to E-(2)-decenoyl-ACP and then its isomerization to Z-(3)-decenoyl-ACP. Can catalyze the dehydratase reaction for beta-hydroxyacyl-ACPs with saturated chain lengths up to 16:0, being most active on intermediate chain length.</text>
</comment>
<comment type="catalytic activity">
    <reaction evidence="1">
        <text>a (3R)-hydroxyacyl-[ACP] = a (2E)-enoyl-[ACP] + H2O</text>
        <dbReference type="Rhea" id="RHEA:13097"/>
        <dbReference type="Rhea" id="RHEA-COMP:9925"/>
        <dbReference type="Rhea" id="RHEA-COMP:9945"/>
        <dbReference type="ChEBI" id="CHEBI:15377"/>
        <dbReference type="ChEBI" id="CHEBI:78784"/>
        <dbReference type="ChEBI" id="CHEBI:78827"/>
        <dbReference type="EC" id="4.2.1.59"/>
    </reaction>
</comment>
<comment type="catalytic activity">
    <reaction evidence="1">
        <text>(3R)-hydroxydecanoyl-[ACP] = (2E)-decenoyl-[ACP] + H2O</text>
        <dbReference type="Rhea" id="RHEA:41860"/>
        <dbReference type="Rhea" id="RHEA-COMP:9638"/>
        <dbReference type="Rhea" id="RHEA-COMP:9639"/>
        <dbReference type="ChEBI" id="CHEBI:15377"/>
        <dbReference type="ChEBI" id="CHEBI:78466"/>
        <dbReference type="ChEBI" id="CHEBI:78467"/>
    </reaction>
</comment>
<comment type="catalytic activity">
    <reaction evidence="1">
        <text>(2E)-decenoyl-[ACP] = (3Z)-decenoyl-[ACP]</text>
        <dbReference type="Rhea" id="RHEA:23568"/>
        <dbReference type="Rhea" id="RHEA-COMP:9639"/>
        <dbReference type="Rhea" id="RHEA-COMP:9927"/>
        <dbReference type="ChEBI" id="CHEBI:78467"/>
        <dbReference type="ChEBI" id="CHEBI:78798"/>
        <dbReference type="EC" id="5.3.3.14"/>
    </reaction>
</comment>
<comment type="pathway">
    <text evidence="1">Lipid metabolism; fatty acid biosynthesis.</text>
</comment>
<comment type="subunit">
    <text evidence="1">Homodimer.</text>
</comment>
<comment type="subcellular location">
    <subcellularLocation>
        <location evidence="1">Cytoplasm</location>
    </subcellularLocation>
</comment>
<comment type="similarity">
    <text evidence="1">Belongs to the thioester dehydratase family. FabA subfamily.</text>
</comment>
<dbReference type="EC" id="4.2.1.59" evidence="1"/>
<dbReference type="EC" id="5.3.3.14" evidence="1"/>
<dbReference type="EMBL" id="CP000606">
    <property type="protein sequence ID" value="ABO23683.1"/>
    <property type="molecule type" value="Genomic_DNA"/>
</dbReference>
<dbReference type="RefSeq" id="WP_011865615.1">
    <property type="nucleotide sequence ID" value="NC_009092.1"/>
</dbReference>
<dbReference type="SMR" id="A3QDY5"/>
<dbReference type="STRING" id="323850.Shew_1817"/>
<dbReference type="KEGG" id="slo:Shew_1817"/>
<dbReference type="eggNOG" id="COG0764">
    <property type="taxonomic scope" value="Bacteria"/>
</dbReference>
<dbReference type="HOGENOM" id="CLU_097925_0_0_6"/>
<dbReference type="OrthoDB" id="9786735at2"/>
<dbReference type="UniPathway" id="UPA00094"/>
<dbReference type="Proteomes" id="UP000001558">
    <property type="component" value="Chromosome"/>
</dbReference>
<dbReference type="GO" id="GO:0005737">
    <property type="term" value="C:cytoplasm"/>
    <property type="evidence" value="ECO:0007669"/>
    <property type="project" value="UniProtKB-SubCell"/>
</dbReference>
<dbReference type="GO" id="GO:0019171">
    <property type="term" value="F:(3R)-hydroxyacyl-[acyl-carrier-protein] dehydratase activity"/>
    <property type="evidence" value="ECO:0007669"/>
    <property type="project" value="UniProtKB-UniRule"/>
</dbReference>
<dbReference type="GO" id="GO:0034017">
    <property type="term" value="F:trans-2-decenoyl-acyl-carrier-protein isomerase activity"/>
    <property type="evidence" value="ECO:0007669"/>
    <property type="project" value="UniProtKB-UniRule"/>
</dbReference>
<dbReference type="GO" id="GO:0006636">
    <property type="term" value="P:unsaturated fatty acid biosynthetic process"/>
    <property type="evidence" value="ECO:0007669"/>
    <property type="project" value="UniProtKB-UniRule"/>
</dbReference>
<dbReference type="CDD" id="cd01287">
    <property type="entry name" value="FabA"/>
    <property type="match status" value="1"/>
</dbReference>
<dbReference type="Gene3D" id="3.10.129.10">
    <property type="entry name" value="Hotdog Thioesterase"/>
    <property type="match status" value="1"/>
</dbReference>
<dbReference type="HAMAP" id="MF_00405">
    <property type="entry name" value="FabA"/>
    <property type="match status" value="1"/>
</dbReference>
<dbReference type="InterPro" id="IPR010083">
    <property type="entry name" value="FabA"/>
</dbReference>
<dbReference type="InterPro" id="IPR013114">
    <property type="entry name" value="FabA_FabZ"/>
</dbReference>
<dbReference type="InterPro" id="IPR029069">
    <property type="entry name" value="HotDog_dom_sf"/>
</dbReference>
<dbReference type="NCBIfam" id="TIGR01749">
    <property type="entry name" value="fabA"/>
    <property type="match status" value="1"/>
</dbReference>
<dbReference type="NCBIfam" id="NF003509">
    <property type="entry name" value="PRK05174.1"/>
    <property type="match status" value="1"/>
</dbReference>
<dbReference type="PANTHER" id="PTHR30272">
    <property type="entry name" value="3-HYDROXYACYL-[ACYL-CARRIER-PROTEIN] DEHYDRATASE"/>
    <property type="match status" value="1"/>
</dbReference>
<dbReference type="PANTHER" id="PTHR30272:SF8">
    <property type="entry name" value="3-HYDROXYDECANOYL-[ACYL-CARRIER-PROTEIN] DEHYDRATASE"/>
    <property type="match status" value="1"/>
</dbReference>
<dbReference type="Pfam" id="PF07977">
    <property type="entry name" value="FabA"/>
    <property type="match status" value="1"/>
</dbReference>
<dbReference type="SUPFAM" id="SSF54637">
    <property type="entry name" value="Thioesterase/thiol ester dehydrase-isomerase"/>
    <property type="match status" value="1"/>
</dbReference>
<feature type="chain" id="PRO_1000201213" description="3-hydroxydecanoyl-[acyl-carrier-protein] dehydratase">
    <location>
        <begin position="1"/>
        <end position="171"/>
    </location>
</feature>
<feature type="active site" evidence="1">
    <location>
        <position position="70"/>
    </location>
</feature>